<proteinExistence type="evidence at transcript level"/>
<gene>
    <name type="primary">HOXA3</name>
    <name type="synonym">HOXD-3</name>
    <name type="synonym">HOXD3</name>
</gene>
<sequence>MQKATYYDSSAIYGAYPYQGANGFTYNASQQQYPPSSSLVETEYHRPACSLQSPGSAVSHHKANDISESCMRTLPSQPLQPPGLTDPQAPPQPPPAPQAQPPPPSSASPSQNASSNPAPANSTKSPALNSPTVSKQIFPWMKESRQNTKQKNSSSSSGESCAGDKSPPGQTSSKRARTAYTSAQLVELEKEFHFNRYLCRPRRVEMANLLNLTERQIKIWFQNRRMKYKKDQKGKGMMTSSGGQSPSRSPVPPAAGGYLNSMHSLVNSVPYEPQSPPPFNKPHQNTYGIPASYTAPLNNCPPPQKRYTGTAAVTPEYDTHPLQGNGYGNPHIQGSPVYVGGNYVETMTNSGPSIFGLTHLSHPPSANMDYSGAGPMGNNHHHGPCDPHPTYTDLTAHHPSQGRIQEAPKLTHL</sequence>
<accession>O93353</accession>
<accession>Q7T3J5</accession>
<protein>
    <recommendedName>
        <fullName>Homeobox protein Hox-A3</fullName>
    </recommendedName>
    <alternativeName>
        <fullName>Homeobox protein Hox-D3</fullName>
    </alternativeName>
</protein>
<name>HXA3_CHICK</name>
<feature type="chain" id="PRO_0000200045" description="Homeobox protein Hox-A3">
    <location>
        <begin position="1"/>
        <end position="413"/>
    </location>
</feature>
<feature type="DNA-binding region" description="Homeobox" evidence="2">
    <location>
        <begin position="173"/>
        <end position="232"/>
    </location>
</feature>
<feature type="region of interest" description="Disordered" evidence="3">
    <location>
        <begin position="72"/>
        <end position="131"/>
    </location>
</feature>
<feature type="region of interest" description="Disordered" evidence="3">
    <location>
        <begin position="143"/>
        <end position="177"/>
    </location>
</feature>
<feature type="region of interest" description="Disordered" evidence="3">
    <location>
        <begin position="230"/>
        <end position="252"/>
    </location>
</feature>
<feature type="region of interest" description="Disordered" evidence="3">
    <location>
        <begin position="374"/>
        <end position="413"/>
    </location>
</feature>
<feature type="short sequence motif" description="Antp-type hexapeptide">
    <location>
        <begin position="137"/>
        <end position="142"/>
    </location>
</feature>
<feature type="compositionally biased region" description="Pro residues" evidence="3">
    <location>
        <begin position="88"/>
        <end position="106"/>
    </location>
</feature>
<feature type="compositionally biased region" description="Low complexity" evidence="3">
    <location>
        <begin position="107"/>
        <end position="122"/>
    </location>
</feature>
<feature type="compositionally biased region" description="Polar residues" evidence="3">
    <location>
        <begin position="168"/>
        <end position="177"/>
    </location>
</feature>
<feature type="compositionally biased region" description="Polar residues" evidence="3">
    <location>
        <begin position="238"/>
        <end position="248"/>
    </location>
</feature>
<feature type="sequence conflict" description="In Ref. 1; AAC19377." evidence="4" ref="1">
    <original>T</original>
    <variation>A</variation>
    <location>
        <position position="171"/>
    </location>
</feature>
<dbReference type="EMBL" id="AF067959">
    <property type="protein sequence ID" value="AAC19377.1"/>
    <property type="molecule type" value="mRNA"/>
</dbReference>
<dbReference type="EMBL" id="AB111110">
    <property type="protein sequence ID" value="BAC77105.1"/>
    <property type="molecule type" value="mRNA"/>
</dbReference>
<dbReference type="RefSeq" id="NP_989879.1">
    <property type="nucleotide sequence ID" value="NM_204548.1"/>
</dbReference>
<dbReference type="SMR" id="O93353"/>
<dbReference type="FunCoup" id="O93353">
    <property type="interactions" value="87"/>
</dbReference>
<dbReference type="STRING" id="9031.ENSGALP00000041461"/>
<dbReference type="PaxDb" id="9031-ENSGALP00000017983"/>
<dbReference type="VEuPathDB" id="HostDB:geneid_395231"/>
<dbReference type="eggNOG" id="KOG0489">
    <property type="taxonomic scope" value="Eukaryota"/>
</dbReference>
<dbReference type="HOGENOM" id="CLU_051508_1_0_1"/>
<dbReference type="InParanoid" id="O93353"/>
<dbReference type="OrthoDB" id="6159439at2759"/>
<dbReference type="PhylomeDB" id="O93353"/>
<dbReference type="TreeFam" id="TF315938"/>
<dbReference type="PRO" id="PR:O93353"/>
<dbReference type="Proteomes" id="UP000000539">
    <property type="component" value="Unassembled WGS sequence"/>
</dbReference>
<dbReference type="GO" id="GO:0005634">
    <property type="term" value="C:nucleus"/>
    <property type="evidence" value="ECO:0000318"/>
    <property type="project" value="GO_Central"/>
</dbReference>
<dbReference type="GO" id="GO:0000981">
    <property type="term" value="F:DNA-binding transcription factor activity, RNA polymerase II-specific"/>
    <property type="evidence" value="ECO:0000318"/>
    <property type="project" value="GO_Central"/>
</dbReference>
<dbReference type="GO" id="GO:0000978">
    <property type="term" value="F:RNA polymerase II cis-regulatory region sequence-specific DNA binding"/>
    <property type="evidence" value="ECO:0000318"/>
    <property type="project" value="GO_Central"/>
</dbReference>
<dbReference type="GO" id="GO:0009952">
    <property type="term" value="P:anterior/posterior pattern specification"/>
    <property type="evidence" value="ECO:0000318"/>
    <property type="project" value="GO_Central"/>
</dbReference>
<dbReference type="GO" id="GO:0048704">
    <property type="term" value="P:embryonic skeletal system morphogenesis"/>
    <property type="evidence" value="ECO:0000318"/>
    <property type="project" value="GO_Central"/>
</dbReference>
<dbReference type="GO" id="GO:0006357">
    <property type="term" value="P:regulation of transcription by RNA polymerase II"/>
    <property type="evidence" value="ECO:0000318"/>
    <property type="project" value="GO_Central"/>
</dbReference>
<dbReference type="CDD" id="cd00086">
    <property type="entry name" value="homeodomain"/>
    <property type="match status" value="1"/>
</dbReference>
<dbReference type="FunFam" id="1.10.10.60:FF:000094">
    <property type="entry name" value="Homeobox protein Hox-A3"/>
    <property type="match status" value="1"/>
</dbReference>
<dbReference type="Gene3D" id="1.10.10.60">
    <property type="entry name" value="Homeodomain-like"/>
    <property type="match status" value="1"/>
</dbReference>
<dbReference type="InterPro" id="IPR025281">
    <property type="entry name" value="DUF4074"/>
</dbReference>
<dbReference type="InterPro" id="IPR001356">
    <property type="entry name" value="HD"/>
</dbReference>
<dbReference type="InterPro" id="IPR020479">
    <property type="entry name" value="HD_metazoa"/>
</dbReference>
<dbReference type="InterPro" id="IPR001827">
    <property type="entry name" value="Homeobox_Antennapedia_CS"/>
</dbReference>
<dbReference type="InterPro" id="IPR017970">
    <property type="entry name" value="Homeobox_CS"/>
</dbReference>
<dbReference type="InterPro" id="IPR009057">
    <property type="entry name" value="Homeodomain-like_sf"/>
</dbReference>
<dbReference type="PANTHER" id="PTHR45664:SF13">
    <property type="entry name" value="HOMEOBOX PROTEIN HOX-A3"/>
    <property type="match status" value="1"/>
</dbReference>
<dbReference type="PANTHER" id="PTHR45664">
    <property type="entry name" value="PROTEIN ZERKNUELLT 1-RELATED"/>
    <property type="match status" value="1"/>
</dbReference>
<dbReference type="Pfam" id="PF13293">
    <property type="entry name" value="DUF4074"/>
    <property type="match status" value="1"/>
</dbReference>
<dbReference type="Pfam" id="PF00046">
    <property type="entry name" value="Homeodomain"/>
    <property type="match status" value="1"/>
</dbReference>
<dbReference type="PRINTS" id="PR00024">
    <property type="entry name" value="HOMEOBOX"/>
</dbReference>
<dbReference type="SMART" id="SM00389">
    <property type="entry name" value="HOX"/>
    <property type="match status" value="1"/>
</dbReference>
<dbReference type="SUPFAM" id="SSF46689">
    <property type="entry name" value="Homeodomain-like"/>
    <property type="match status" value="1"/>
</dbReference>
<dbReference type="PROSITE" id="PS00032">
    <property type="entry name" value="ANTENNAPEDIA"/>
    <property type="match status" value="1"/>
</dbReference>
<dbReference type="PROSITE" id="PS00027">
    <property type="entry name" value="HOMEOBOX_1"/>
    <property type="match status" value="1"/>
</dbReference>
<dbReference type="PROSITE" id="PS50071">
    <property type="entry name" value="HOMEOBOX_2"/>
    <property type="match status" value="1"/>
</dbReference>
<reference key="1">
    <citation type="journal article" date="1998" name="Dev. Dyn.">
        <title>Analysis of Hox gene expression during early avian heart development.</title>
        <authorList>
            <person name="Searcy R.D."/>
            <person name="Yutzey K.E."/>
        </authorList>
    </citation>
    <scope>NUCLEOTIDE SEQUENCE [MRNA]</scope>
</reference>
<reference key="2">
    <citation type="submission" date="2003-05" db="EMBL/GenBank/DDBJ databases">
        <title>Hoxa3 is required for branchial nerve development.</title>
        <authorList>
            <person name="Watari-Goshima N."/>
            <person name="Chisaka O."/>
        </authorList>
    </citation>
    <scope>NUCLEOTIDE SEQUENCE [MRNA]</scope>
</reference>
<organism>
    <name type="scientific">Gallus gallus</name>
    <name type="common">Chicken</name>
    <dbReference type="NCBI Taxonomy" id="9031"/>
    <lineage>
        <taxon>Eukaryota</taxon>
        <taxon>Metazoa</taxon>
        <taxon>Chordata</taxon>
        <taxon>Craniata</taxon>
        <taxon>Vertebrata</taxon>
        <taxon>Euteleostomi</taxon>
        <taxon>Archelosauria</taxon>
        <taxon>Archosauria</taxon>
        <taxon>Dinosauria</taxon>
        <taxon>Saurischia</taxon>
        <taxon>Theropoda</taxon>
        <taxon>Coelurosauria</taxon>
        <taxon>Aves</taxon>
        <taxon>Neognathae</taxon>
        <taxon>Galloanserae</taxon>
        <taxon>Galliformes</taxon>
        <taxon>Phasianidae</taxon>
        <taxon>Phasianinae</taxon>
        <taxon>Gallus</taxon>
    </lineage>
</organism>
<comment type="function">
    <text evidence="1">Sequence-specific transcription factor which is part of a developmental regulatory system that provides cells with specific positional identities on the anterior-posterior axis.</text>
</comment>
<comment type="subcellular location">
    <subcellularLocation>
        <location evidence="2">Nucleus</location>
    </subcellularLocation>
</comment>
<comment type="similarity">
    <text evidence="4">Belongs to the Antp homeobox family.</text>
</comment>
<keyword id="KW-0217">Developmental protein</keyword>
<keyword id="KW-0238">DNA-binding</keyword>
<keyword id="KW-0371">Homeobox</keyword>
<keyword id="KW-0539">Nucleus</keyword>
<keyword id="KW-1185">Reference proteome</keyword>
<keyword id="KW-0804">Transcription</keyword>
<keyword id="KW-0805">Transcription regulation</keyword>
<evidence type="ECO:0000250" key="1"/>
<evidence type="ECO:0000255" key="2">
    <source>
        <dbReference type="PROSITE-ProRule" id="PRU00108"/>
    </source>
</evidence>
<evidence type="ECO:0000256" key="3">
    <source>
        <dbReference type="SAM" id="MobiDB-lite"/>
    </source>
</evidence>
<evidence type="ECO:0000305" key="4"/>